<feature type="chain" id="PRO_0000352136" description="Small ribosomal subunit protein uS2c">
    <location>
        <begin position="1"/>
        <end position="238"/>
    </location>
</feature>
<comment type="subcellular location">
    <subcellularLocation>
        <location>Plastid</location>
        <location>Chloroplast</location>
    </subcellularLocation>
</comment>
<comment type="similarity">
    <text evidence="1">Belongs to the universal ribosomal protein uS2 family.</text>
</comment>
<geneLocation type="chloroplast"/>
<sequence>MTRRYWNISLEEMMEAGVHFGHGTRKWNPRMAPYISAKRKGIHITNLTRTARFLSEACDLVFDAASRGKHFLIVGTKDKAADSVASAAIRARCHYVNKKWLGGMSTNWSTTETRLHKFRDLRVRAEMGQLSRLPKRDAAILKRQLSHFQTYLGGIKYMTGLPDIVIIIDQQEEYTALRECVTLGIPTICLIDTNCDPDLADIPIPANDDAIASIRLILNKLVSAICQGRSSYSYIRSR</sequence>
<keyword id="KW-0150">Chloroplast</keyword>
<keyword id="KW-0934">Plastid</keyword>
<keyword id="KW-0687">Ribonucleoprotein</keyword>
<keyword id="KW-0689">Ribosomal protein</keyword>
<gene>
    <name type="primary">rps2</name>
</gene>
<evidence type="ECO:0000305" key="1"/>
<organism>
    <name type="scientific">Nuphar advena</name>
    <name type="common">Common spatterdock</name>
    <name type="synonym">Nuphar lutea subsp. advena</name>
    <dbReference type="NCBI Taxonomy" id="77108"/>
    <lineage>
        <taxon>Eukaryota</taxon>
        <taxon>Viridiplantae</taxon>
        <taxon>Streptophyta</taxon>
        <taxon>Embryophyta</taxon>
        <taxon>Tracheophyta</taxon>
        <taxon>Spermatophyta</taxon>
        <taxon>Magnoliopsida</taxon>
        <taxon>Nymphaeales</taxon>
        <taxon>Nymphaeaceae</taxon>
        <taxon>Nuphar</taxon>
    </lineage>
</organism>
<dbReference type="EMBL" id="DQ069465">
    <property type="protein sequence ID" value="AAZ03903.1"/>
    <property type="molecule type" value="Genomic_DNA"/>
</dbReference>
<dbReference type="EMBL" id="DQ354691">
    <property type="protein sequence ID" value="ABC60447.1"/>
    <property type="molecule type" value="Genomic_DNA"/>
</dbReference>
<dbReference type="RefSeq" id="YP_001001523.1">
    <property type="nucleotide sequence ID" value="NC_008788.1"/>
</dbReference>
<dbReference type="SMR" id="Q4FG66"/>
<dbReference type="GeneID" id="4699605"/>
<dbReference type="GO" id="GO:0009507">
    <property type="term" value="C:chloroplast"/>
    <property type="evidence" value="ECO:0007669"/>
    <property type="project" value="UniProtKB-SubCell"/>
</dbReference>
<dbReference type="GO" id="GO:0005763">
    <property type="term" value="C:mitochondrial small ribosomal subunit"/>
    <property type="evidence" value="ECO:0007669"/>
    <property type="project" value="TreeGrafter"/>
</dbReference>
<dbReference type="GO" id="GO:0003735">
    <property type="term" value="F:structural constituent of ribosome"/>
    <property type="evidence" value="ECO:0007669"/>
    <property type="project" value="InterPro"/>
</dbReference>
<dbReference type="GO" id="GO:0006412">
    <property type="term" value="P:translation"/>
    <property type="evidence" value="ECO:0007669"/>
    <property type="project" value="UniProtKB-UniRule"/>
</dbReference>
<dbReference type="CDD" id="cd01425">
    <property type="entry name" value="RPS2"/>
    <property type="match status" value="1"/>
</dbReference>
<dbReference type="FunFam" id="1.10.287.610:FF:000001">
    <property type="entry name" value="30S ribosomal protein S2"/>
    <property type="match status" value="1"/>
</dbReference>
<dbReference type="Gene3D" id="3.40.50.10490">
    <property type="entry name" value="Glucose-6-phosphate isomerase like protein, domain 1"/>
    <property type="match status" value="1"/>
</dbReference>
<dbReference type="Gene3D" id="1.10.287.610">
    <property type="entry name" value="Helix hairpin bin"/>
    <property type="match status" value="1"/>
</dbReference>
<dbReference type="HAMAP" id="MF_00291_B">
    <property type="entry name" value="Ribosomal_uS2_B"/>
    <property type="match status" value="1"/>
</dbReference>
<dbReference type="InterPro" id="IPR001865">
    <property type="entry name" value="Ribosomal_uS2"/>
</dbReference>
<dbReference type="InterPro" id="IPR005706">
    <property type="entry name" value="Ribosomal_uS2_bac/mit/plastid"/>
</dbReference>
<dbReference type="InterPro" id="IPR018130">
    <property type="entry name" value="Ribosomal_uS2_CS"/>
</dbReference>
<dbReference type="InterPro" id="IPR023591">
    <property type="entry name" value="Ribosomal_uS2_flav_dom_sf"/>
</dbReference>
<dbReference type="NCBIfam" id="TIGR01011">
    <property type="entry name" value="rpsB_bact"/>
    <property type="match status" value="1"/>
</dbReference>
<dbReference type="PANTHER" id="PTHR12534">
    <property type="entry name" value="30S RIBOSOMAL PROTEIN S2 PROKARYOTIC AND ORGANELLAR"/>
    <property type="match status" value="1"/>
</dbReference>
<dbReference type="PANTHER" id="PTHR12534:SF0">
    <property type="entry name" value="SMALL RIBOSOMAL SUBUNIT PROTEIN US2M"/>
    <property type="match status" value="1"/>
</dbReference>
<dbReference type="Pfam" id="PF00318">
    <property type="entry name" value="Ribosomal_S2"/>
    <property type="match status" value="1"/>
</dbReference>
<dbReference type="PRINTS" id="PR00395">
    <property type="entry name" value="RIBOSOMALS2"/>
</dbReference>
<dbReference type="SUPFAM" id="SSF52313">
    <property type="entry name" value="Ribosomal protein S2"/>
    <property type="match status" value="1"/>
</dbReference>
<dbReference type="PROSITE" id="PS00962">
    <property type="entry name" value="RIBOSOMAL_S2_1"/>
    <property type="match status" value="1"/>
</dbReference>
<dbReference type="PROSITE" id="PS00963">
    <property type="entry name" value="RIBOSOMAL_S2_2"/>
    <property type="match status" value="1"/>
</dbReference>
<protein>
    <recommendedName>
        <fullName evidence="1">Small ribosomal subunit protein uS2c</fullName>
    </recommendedName>
    <alternativeName>
        <fullName>30S ribosomal protein S2, chloroplastic</fullName>
    </alternativeName>
</protein>
<reference key="1">
    <citation type="journal article" date="2005" name="Mol. Biol. Evol.">
        <title>Identifying the basal angiosperm node in chloroplast genome phylogenies: sampling one's way out of the Felsenstein zone.</title>
        <authorList>
            <person name="Leebens-Mack J."/>
            <person name="Raubeson L.A."/>
            <person name="Cui L."/>
            <person name="Kuehl J.V."/>
            <person name="Fourcade M.H."/>
            <person name="Chumley T.W."/>
            <person name="Boore J.L."/>
            <person name="Jansen R.K."/>
            <person name="dePamphilis C.W."/>
        </authorList>
    </citation>
    <scope>NUCLEOTIDE SEQUENCE [GENOMIC DNA]</scope>
</reference>
<reference key="2">
    <citation type="journal article" date="2007" name="BMC Genomics">
        <title>Comparative chloroplast genomics: analyses including new sequences from the angiosperms Nuphar advena and Ranunculus macranthus.</title>
        <authorList>
            <person name="Raubeson L.A."/>
            <person name="Peery R."/>
            <person name="Chumley T.W."/>
            <person name="Dziubek C."/>
            <person name="Fourcade H.M."/>
            <person name="Boore J.L."/>
            <person name="Jansen R.K."/>
        </authorList>
    </citation>
    <scope>NUCLEOTIDE SEQUENCE [LARGE SCALE GENOMIC DNA]</scope>
</reference>
<name>RR2_NUPAD</name>
<proteinExistence type="inferred from homology"/>
<accession>Q4FG66</accession>